<accession>Q891T0</accession>
<name>SYT_CLOTE</name>
<sequence>MINITLKDGKVIEVEKGVKVSDIVMKISPALYKKAVGAKINGEIAELMTEIKEDSELEILTFDDEEGRKTVRHTSSHILAQAVKRLYPEAKLAIGPAIDNGFYYDFDIDFTFTPEMLEKIEKEMAKIVKENLEIERFELPREEAIKLVKDASEPYKVELIEDLPEGEVISFYKQGDFVDLCAGPHLPSTGKIKAIKLLSVAGAYWRGDEKNKMLQRIYGTAFLKKSELEAYLKMLEEAKRRDHRKLGKELDLFTINEEGPGFPFFHPKGMVVRNILENFWREKHTKAGYDEIRTPVILNEELWHRSGHWDHYKENMYFTKIDNENFAIKPMNCPGSILVYKSHLHSYKEFPMRLGELGLVHRHELSGALHGLMRVRCFTQDDAHIFMTKEQIKDEILNVIKLIDSFYKVFGFEYFVELSTRPEDSMGSDEDWEVATNGLKNALEGAGLEYKINEGDGAFYGPKIDFHLKDCIGRTWQCGTIQLDFQMPERFDLTYVGQDGEKHRPVMVHRVVFGSIERFIGILIEHFAGAFPTWLAPVQVKVMTITDSQKDYANKVVNDLKEKGIRVEFDDRNEKIGYKIREAQLQKVPYMIILGDKEVSENKVAVRSRKEGDLGAISLKEFVAKLNYEIDNRIVENSK</sequence>
<proteinExistence type="inferred from homology"/>
<organism>
    <name type="scientific">Clostridium tetani (strain Massachusetts / E88)</name>
    <dbReference type="NCBI Taxonomy" id="212717"/>
    <lineage>
        <taxon>Bacteria</taxon>
        <taxon>Bacillati</taxon>
        <taxon>Bacillota</taxon>
        <taxon>Clostridia</taxon>
        <taxon>Eubacteriales</taxon>
        <taxon>Clostridiaceae</taxon>
        <taxon>Clostridium</taxon>
    </lineage>
</organism>
<comment type="function">
    <text evidence="1">Catalyzes the attachment of threonine to tRNA(Thr) in a two-step reaction: L-threonine is first activated by ATP to form Thr-AMP and then transferred to the acceptor end of tRNA(Thr). Also edits incorrectly charged L-seryl-tRNA(Thr).</text>
</comment>
<comment type="catalytic activity">
    <reaction evidence="1">
        <text>tRNA(Thr) + L-threonine + ATP = L-threonyl-tRNA(Thr) + AMP + diphosphate + H(+)</text>
        <dbReference type="Rhea" id="RHEA:24624"/>
        <dbReference type="Rhea" id="RHEA-COMP:9670"/>
        <dbReference type="Rhea" id="RHEA-COMP:9704"/>
        <dbReference type="ChEBI" id="CHEBI:15378"/>
        <dbReference type="ChEBI" id="CHEBI:30616"/>
        <dbReference type="ChEBI" id="CHEBI:33019"/>
        <dbReference type="ChEBI" id="CHEBI:57926"/>
        <dbReference type="ChEBI" id="CHEBI:78442"/>
        <dbReference type="ChEBI" id="CHEBI:78534"/>
        <dbReference type="ChEBI" id="CHEBI:456215"/>
        <dbReference type="EC" id="6.1.1.3"/>
    </reaction>
</comment>
<comment type="cofactor">
    <cofactor evidence="1">
        <name>Zn(2+)</name>
        <dbReference type="ChEBI" id="CHEBI:29105"/>
    </cofactor>
    <text evidence="1">Binds 1 zinc ion per subunit.</text>
</comment>
<comment type="subunit">
    <text evidence="1">Homodimer.</text>
</comment>
<comment type="subcellular location">
    <subcellularLocation>
        <location evidence="1">Cytoplasm</location>
    </subcellularLocation>
</comment>
<comment type="similarity">
    <text evidence="1">Belongs to the class-II aminoacyl-tRNA synthetase family.</text>
</comment>
<reference key="1">
    <citation type="journal article" date="2003" name="Proc. Natl. Acad. Sci. U.S.A.">
        <title>The genome sequence of Clostridium tetani, the causative agent of tetanus disease.</title>
        <authorList>
            <person name="Brueggemann H."/>
            <person name="Baeumer S."/>
            <person name="Fricke W.F."/>
            <person name="Wiezer A."/>
            <person name="Liesegang H."/>
            <person name="Decker I."/>
            <person name="Herzberg C."/>
            <person name="Martinez-Arias R."/>
            <person name="Merkl R."/>
            <person name="Henne A."/>
            <person name="Gottschalk G."/>
        </authorList>
    </citation>
    <scope>NUCLEOTIDE SEQUENCE [LARGE SCALE GENOMIC DNA]</scope>
    <source>
        <strain>Massachusetts / E88</strain>
    </source>
</reference>
<gene>
    <name evidence="1" type="primary">thrS</name>
    <name type="ordered locus">CTC_02286</name>
</gene>
<evidence type="ECO:0000255" key="1">
    <source>
        <dbReference type="HAMAP-Rule" id="MF_00184"/>
    </source>
</evidence>
<evidence type="ECO:0000255" key="2">
    <source>
        <dbReference type="PROSITE-ProRule" id="PRU01228"/>
    </source>
</evidence>
<feature type="chain" id="PRO_0000100967" description="Threonine--tRNA ligase">
    <location>
        <begin position="1"/>
        <end position="639"/>
    </location>
</feature>
<feature type="domain" description="TGS" evidence="2">
    <location>
        <begin position="1"/>
        <end position="61"/>
    </location>
</feature>
<feature type="region of interest" description="Catalytic" evidence="1">
    <location>
        <begin position="242"/>
        <end position="532"/>
    </location>
</feature>
<feature type="binding site" evidence="1">
    <location>
        <position position="333"/>
    </location>
    <ligand>
        <name>Zn(2+)</name>
        <dbReference type="ChEBI" id="CHEBI:29105"/>
    </ligand>
</feature>
<feature type="binding site" evidence="1">
    <location>
        <position position="384"/>
    </location>
    <ligand>
        <name>Zn(2+)</name>
        <dbReference type="ChEBI" id="CHEBI:29105"/>
    </ligand>
</feature>
<feature type="binding site" evidence="1">
    <location>
        <position position="509"/>
    </location>
    <ligand>
        <name>Zn(2+)</name>
        <dbReference type="ChEBI" id="CHEBI:29105"/>
    </ligand>
</feature>
<protein>
    <recommendedName>
        <fullName evidence="1">Threonine--tRNA ligase</fullName>
        <ecNumber evidence="1">6.1.1.3</ecNumber>
    </recommendedName>
    <alternativeName>
        <fullName evidence="1">Threonyl-tRNA synthetase</fullName>
        <shortName evidence="1">ThrRS</shortName>
    </alternativeName>
</protein>
<dbReference type="EC" id="6.1.1.3" evidence="1"/>
<dbReference type="EMBL" id="AE015927">
    <property type="protein sequence ID" value="AAO36765.1"/>
    <property type="molecule type" value="Genomic_DNA"/>
</dbReference>
<dbReference type="RefSeq" id="WP_011100426.1">
    <property type="nucleotide sequence ID" value="NC_004557.1"/>
</dbReference>
<dbReference type="SMR" id="Q891T0"/>
<dbReference type="STRING" id="212717.CTC_02286"/>
<dbReference type="GeneID" id="24253800"/>
<dbReference type="KEGG" id="ctc:CTC_02286"/>
<dbReference type="HOGENOM" id="CLU_008554_0_1_9"/>
<dbReference type="OrthoDB" id="9802304at2"/>
<dbReference type="Proteomes" id="UP000001412">
    <property type="component" value="Chromosome"/>
</dbReference>
<dbReference type="GO" id="GO:0005737">
    <property type="term" value="C:cytoplasm"/>
    <property type="evidence" value="ECO:0007669"/>
    <property type="project" value="UniProtKB-SubCell"/>
</dbReference>
<dbReference type="GO" id="GO:0005524">
    <property type="term" value="F:ATP binding"/>
    <property type="evidence" value="ECO:0007669"/>
    <property type="project" value="UniProtKB-UniRule"/>
</dbReference>
<dbReference type="GO" id="GO:0140096">
    <property type="term" value="F:catalytic activity, acting on a protein"/>
    <property type="evidence" value="ECO:0007669"/>
    <property type="project" value="UniProtKB-ARBA"/>
</dbReference>
<dbReference type="GO" id="GO:0046872">
    <property type="term" value="F:metal ion binding"/>
    <property type="evidence" value="ECO:0007669"/>
    <property type="project" value="UniProtKB-KW"/>
</dbReference>
<dbReference type="GO" id="GO:0004829">
    <property type="term" value="F:threonine-tRNA ligase activity"/>
    <property type="evidence" value="ECO:0007669"/>
    <property type="project" value="UniProtKB-UniRule"/>
</dbReference>
<dbReference type="GO" id="GO:0016740">
    <property type="term" value="F:transferase activity"/>
    <property type="evidence" value="ECO:0007669"/>
    <property type="project" value="UniProtKB-ARBA"/>
</dbReference>
<dbReference type="GO" id="GO:0000049">
    <property type="term" value="F:tRNA binding"/>
    <property type="evidence" value="ECO:0007669"/>
    <property type="project" value="UniProtKB-KW"/>
</dbReference>
<dbReference type="GO" id="GO:0006435">
    <property type="term" value="P:threonyl-tRNA aminoacylation"/>
    <property type="evidence" value="ECO:0007669"/>
    <property type="project" value="UniProtKB-UniRule"/>
</dbReference>
<dbReference type="CDD" id="cd01667">
    <property type="entry name" value="TGS_ThrRS"/>
    <property type="match status" value="1"/>
</dbReference>
<dbReference type="CDD" id="cd00860">
    <property type="entry name" value="ThrRS_anticodon"/>
    <property type="match status" value="1"/>
</dbReference>
<dbReference type="CDD" id="cd00771">
    <property type="entry name" value="ThrRS_core"/>
    <property type="match status" value="1"/>
</dbReference>
<dbReference type="FunFam" id="3.10.20.30:FF:000005">
    <property type="entry name" value="Threonine--tRNA ligase"/>
    <property type="match status" value="1"/>
</dbReference>
<dbReference type="FunFam" id="3.30.54.20:FF:000002">
    <property type="entry name" value="Threonine--tRNA ligase"/>
    <property type="match status" value="1"/>
</dbReference>
<dbReference type="FunFam" id="3.30.930.10:FF:000002">
    <property type="entry name" value="Threonine--tRNA ligase"/>
    <property type="match status" value="1"/>
</dbReference>
<dbReference type="FunFam" id="3.40.50.800:FF:000001">
    <property type="entry name" value="Threonine--tRNA ligase"/>
    <property type="match status" value="1"/>
</dbReference>
<dbReference type="FunFam" id="3.30.980.10:FF:000005">
    <property type="entry name" value="Threonyl-tRNA synthetase, mitochondrial"/>
    <property type="match status" value="1"/>
</dbReference>
<dbReference type="Gene3D" id="3.10.20.30">
    <property type="match status" value="1"/>
</dbReference>
<dbReference type="Gene3D" id="3.30.54.20">
    <property type="match status" value="1"/>
</dbReference>
<dbReference type="Gene3D" id="3.40.50.800">
    <property type="entry name" value="Anticodon-binding domain"/>
    <property type="match status" value="1"/>
</dbReference>
<dbReference type="Gene3D" id="3.30.930.10">
    <property type="entry name" value="Bira Bifunctional Protein, Domain 2"/>
    <property type="match status" value="1"/>
</dbReference>
<dbReference type="Gene3D" id="3.30.980.10">
    <property type="entry name" value="Threonyl-trna Synthetase, Chain A, domain 2"/>
    <property type="match status" value="1"/>
</dbReference>
<dbReference type="HAMAP" id="MF_00184">
    <property type="entry name" value="Thr_tRNA_synth"/>
    <property type="match status" value="1"/>
</dbReference>
<dbReference type="InterPro" id="IPR002314">
    <property type="entry name" value="aa-tRNA-synt_IIb"/>
</dbReference>
<dbReference type="InterPro" id="IPR006195">
    <property type="entry name" value="aa-tRNA-synth_II"/>
</dbReference>
<dbReference type="InterPro" id="IPR045864">
    <property type="entry name" value="aa-tRNA-synth_II/BPL/LPL"/>
</dbReference>
<dbReference type="InterPro" id="IPR004154">
    <property type="entry name" value="Anticodon-bd"/>
</dbReference>
<dbReference type="InterPro" id="IPR036621">
    <property type="entry name" value="Anticodon-bd_dom_sf"/>
</dbReference>
<dbReference type="InterPro" id="IPR012675">
    <property type="entry name" value="Beta-grasp_dom_sf"/>
</dbReference>
<dbReference type="InterPro" id="IPR004095">
    <property type="entry name" value="TGS"/>
</dbReference>
<dbReference type="InterPro" id="IPR012676">
    <property type="entry name" value="TGS-like"/>
</dbReference>
<dbReference type="InterPro" id="IPR002320">
    <property type="entry name" value="Thr-tRNA-ligase_IIa"/>
</dbReference>
<dbReference type="InterPro" id="IPR018163">
    <property type="entry name" value="Thr/Ala-tRNA-synth_IIc_edit"/>
</dbReference>
<dbReference type="InterPro" id="IPR047246">
    <property type="entry name" value="ThrRS_anticodon"/>
</dbReference>
<dbReference type="InterPro" id="IPR033728">
    <property type="entry name" value="ThrRS_core"/>
</dbReference>
<dbReference type="InterPro" id="IPR012947">
    <property type="entry name" value="tRNA_SAD"/>
</dbReference>
<dbReference type="NCBIfam" id="TIGR00418">
    <property type="entry name" value="thrS"/>
    <property type="match status" value="1"/>
</dbReference>
<dbReference type="PANTHER" id="PTHR11451:SF44">
    <property type="entry name" value="THREONINE--TRNA LIGASE, CHLOROPLASTIC_MITOCHONDRIAL 2"/>
    <property type="match status" value="1"/>
</dbReference>
<dbReference type="PANTHER" id="PTHR11451">
    <property type="entry name" value="THREONINE-TRNA LIGASE"/>
    <property type="match status" value="1"/>
</dbReference>
<dbReference type="Pfam" id="PF03129">
    <property type="entry name" value="HGTP_anticodon"/>
    <property type="match status" value="1"/>
</dbReference>
<dbReference type="Pfam" id="PF02824">
    <property type="entry name" value="TGS"/>
    <property type="match status" value="1"/>
</dbReference>
<dbReference type="Pfam" id="PF00587">
    <property type="entry name" value="tRNA-synt_2b"/>
    <property type="match status" value="1"/>
</dbReference>
<dbReference type="Pfam" id="PF07973">
    <property type="entry name" value="tRNA_SAD"/>
    <property type="match status" value="1"/>
</dbReference>
<dbReference type="PRINTS" id="PR01047">
    <property type="entry name" value="TRNASYNTHTHR"/>
</dbReference>
<dbReference type="SMART" id="SM00863">
    <property type="entry name" value="tRNA_SAD"/>
    <property type="match status" value="1"/>
</dbReference>
<dbReference type="SUPFAM" id="SSF52954">
    <property type="entry name" value="Class II aaRS ABD-related"/>
    <property type="match status" value="1"/>
</dbReference>
<dbReference type="SUPFAM" id="SSF55681">
    <property type="entry name" value="Class II aaRS and biotin synthetases"/>
    <property type="match status" value="1"/>
</dbReference>
<dbReference type="SUPFAM" id="SSF81271">
    <property type="entry name" value="TGS-like"/>
    <property type="match status" value="1"/>
</dbReference>
<dbReference type="SUPFAM" id="SSF55186">
    <property type="entry name" value="ThrRS/AlaRS common domain"/>
    <property type="match status" value="1"/>
</dbReference>
<dbReference type="PROSITE" id="PS50862">
    <property type="entry name" value="AA_TRNA_LIGASE_II"/>
    <property type="match status" value="1"/>
</dbReference>
<dbReference type="PROSITE" id="PS51880">
    <property type="entry name" value="TGS"/>
    <property type="match status" value="1"/>
</dbReference>
<keyword id="KW-0030">Aminoacyl-tRNA synthetase</keyword>
<keyword id="KW-0067">ATP-binding</keyword>
<keyword id="KW-0963">Cytoplasm</keyword>
<keyword id="KW-0436">Ligase</keyword>
<keyword id="KW-0479">Metal-binding</keyword>
<keyword id="KW-0547">Nucleotide-binding</keyword>
<keyword id="KW-0648">Protein biosynthesis</keyword>
<keyword id="KW-1185">Reference proteome</keyword>
<keyword id="KW-0694">RNA-binding</keyword>
<keyword id="KW-0820">tRNA-binding</keyword>
<keyword id="KW-0862">Zinc</keyword>